<proteinExistence type="evidence at transcript level"/>
<protein>
    <recommendedName>
        <fullName>Interleukin-2</fullName>
        <shortName>IL-2</shortName>
    </recommendedName>
    <alternativeName>
        <fullName>T-cell growth factor</fullName>
        <shortName>TCGF</shortName>
    </alternativeName>
</protein>
<dbReference type="EMBL" id="AJ621188">
    <property type="protein sequence ID" value="CAF18412.1"/>
    <property type="molecule type" value="mRNA"/>
</dbReference>
<dbReference type="RefSeq" id="XP_025872571.1">
    <property type="nucleotide sequence ID" value="XM_026016786.1"/>
</dbReference>
<dbReference type="SMR" id="Q25BC3"/>
<dbReference type="STRING" id="9627.ENSVVUP00000018521"/>
<dbReference type="GlyCosmos" id="Q25BC3">
    <property type="glycosylation" value="2 sites, No reported glycans"/>
</dbReference>
<dbReference type="Ensembl" id="ENSVVUT00000024408">
    <property type="protein sequence ID" value="ENSVVUP00000018521"/>
    <property type="gene ID" value="ENSVVUG00000013605"/>
</dbReference>
<dbReference type="GeneID" id="112933619"/>
<dbReference type="OMA" id="NGVNNYE"/>
<dbReference type="Proteomes" id="UP000286640">
    <property type="component" value="Unplaced"/>
</dbReference>
<dbReference type="GO" id="GO:0005615">
    <property type="term" value="C:extracellular space"/>
    <property type="evidence" value="ECO:0007669"/>
    <property type="project" value="UniProtKB-KW"/>
</dbReference>
<dbReference type="GO" id="GO:0005125">
    <property type="term" value="F:cytokine activity"/>
    <property type="evidence" value="ECO:0007669"/>
    <property type="project" value="UniProtKB-KW"/>
</dbReference>
<dbReference type="GO" id="GO:0008083">
    <property type="term" value="F:growth factor activity"/>
    <property type="evidence" value="ECO:0007669"/>
    <property type="project" value="UniProtKB-KW"/>
</dbReference>
<dbReference type="GO" id="GO:0005134">
    <property type="term" value="F:interleukin-2 receptor binding"/>
    <property type="evidence" value="ECO:0007669"/>
    <property type="project" value="Ensembl"/>
</dbReference>
<dbReference type="GO" id="GO:0050798">
    <property type="term" value="P:activated T cell proliferation"/>
    <property type="evidence" value="ECO:0007669"/>
    <property type="project" value="Ensembl"/>
</dbReference>
<dbReference type="GO" id="GO:0002250">
    <property type="term" value="P:adaptive immune response"/>
    <property type="evidence" value="ECO:0007669"/>
    <property type="project" value="UniProtKB-KW"/>
</dbReference>
<dbReference type="GO" id="GO:0097696">
    <property type="term" value="P:cell surface receptor signaling pathway via STAT"/>
    <property type="evidence" value="ECO:0007669"/>
    <property type="project" value="Ensembl"/>
</dbReference>
<dbReference type="GO" id="GO:0097192">
    <property type="term" value="P:extrinsic apoptotic signaling pathway in absence of ligand"/>
    <property type="evidence" value="ECO:0007669"/>
    <property type="project" value="Ensembl"/>
</dbReference>
<dbReference type="GO" id="GO:0038110">
    <property type="term" value="P:interleukin-2-mediated signaling pathway"/>
    <property type="evidence" value="ECO:0007669"/>
    <property type="project" value="Ensembl"/>
</dbReference>
<dbReference type="GO" id="GO:0002366">
    <property type="term" value="P:leukocyte activation involved in immune response"/>
    <property type="evidence" value="ECO:0007669"/>
    <property type="project" value="Ensembl"/>
</dbReference>
<dbReference type="GO" id="GO:0002903">
    <property type="term" value="P:negative regulation of B cell apoptotic process"/>
    <property type="evidence" value="ECO:0007669"/>
    <property type="project" value="Ensembl"/>
</dbReference>
<dbReference type="GO" id="GO:0050728">
    <property type="term" value="P:negative regulation of inflammatory response"/>
    <property type="evidence" value="ECO:0007669"/>
    <property type="project" value="Ensembl"/>
</dbReference>
<dbReference type="GO" id="GO:0050672">
    <property type="term" value="P:negative regulation of lymphocyte proliferation"/>
    <property type="evidence" value="ECO:0007669"/>
    <property type="project" value="Ensembl"/>
</dbReference>
<dbReference type="GO" id="GO:2000320">
    <property type="term" value="P:negative regulation of T-helper 17 cell differentiation"/>
    <property type="evidence" value="ECO:0007669"/>
    <property type="project" value="Ensembl"/>
</dbReference>
<dbReference type="GO" id="GO:0042104">
    <property type="term" value="P:positive regulation of activated T cell proliferation"/>
    <property type="evidence" value="ECO:0007669"/>
    <property type="project" value="Ensembl"/>
</dbReference>
<dbReference type="GO" id="GO:0030890">
    <property type="term" value="P:positive regulation of B cell proliferation"/>
    <property type="evidence" value="ECO:0007669"/>
    <property type="project" value="Ensembl"/>
</dbReference>
<dbReference type="GO" id="GO:0032740">
    <property type="term" value="P:positive regulation of interleukin-17 production"/>
    <property type="evidence" value="ECO:0007669"/>
    <property type="project" value="Ensembl"/>
</dbReference>
<dbReference type="GO" id="GO:0048304">
    <property type="term" value="P:positive regulation of isotype switching to IgG isotypes"/>
    <property type="evidence" value="ECO:0007669"/>
    <property type="project" value="Ensembl"/>
</dbReference>
<dbReference type="GO" id="GO:1900100">
    <property type="term" value="P:positive regulation of plasma cell differentiation"/>
    <property type="evidence" value="ECO:0007669"/>
    <property type="project" value="Ensembl"/>
</dbReference>
<dbReference type="GO" id="GO:0045944">
    <property type="term" value="P:positive regulation of transcription by RNA polymerase II"/>
    <property type="evidence" value="ECO:0007669"/>
    <property type="project" value="Ensembl"/>
</dbReference>
<dbReference type="GO" id="GO:0032729">
    <property type="term" value="P:positive regulation of type II interferon production"/>
    <property type="evidence" value="ECO:0007669"/>
    <property type="project" value="Ensembl"/>
</dbReference>
<dbReference type="GO" id="GO:2000561">
    <property type="term" value="P:regulation of CD4-positive, alpha-beta T cell proliferation"/>
    <property type="evidence" value="ECO:0007669"/>
    <property type="project" value="Ensembl"/>
</dbReference>
<dbReference type="GO" id="GO:0046013">
    <property type="term" value="P:regulation of T cell homeostatic proliferation"/>
    <property type="evidence" value="ECO:0007669"/>
    <property type="project" value="Ensembl"/>
</dbReference>
<dbReference type="GO" id="GO:0006366">
    <property type="term" value="P:transcription by RNA polymerase II"/>
    <property type="evidence" value="ECO:0007669"/>
    <property type="project" value="Ensembl"/>
</dbReference>
<dbReference type="Gene3D" id="1.20.1250.10">
    <property type="match status" value="1"/>
</dbReference>
<dbReference type="InterPro" id="IPR009079">
    <property type="entry name" value="4_helix_cytokine-like_core"/>
</dbReference>
<dbReference type="InterPro" id="IPR000779">
    <property type="entry name" value="IL-2"/>
</dbReference>
<dbReference type="InterPro" id="IPR030477">
    <property type="entry name" value="IL-2_CS"/>
</dbReference>
<dbReference type="PANTHER" id="PTHR48487">
    <property type="entry name" value="INTERLEUKIN-2"/>
    <property type="match status" value="1"/>
</dbReference>
<dbReference type="PANTHER" id="PTHR48487:SF1">
    <property type="entry name" value="INTERLEUKIN-2"/>
    <property type="match status" value="1"/>
</dbReference>
<dbReference type="Pfam" id="PF00715">
    <property type="entry name" value="IL2"/>
    <property type="match status" value="1"/>
</dbReference>
<dbReference type="PRINTS" id="PR00265">
    <property type="entry name" value="INTERLEUKIN2"/>
</dbReference>
<dbReference type="SMART" id="SM00189">
    <property type="entry name" value="IL2"/>
    <property type="match status" value="1"/>
</dbReference>
<dbReference type="SUPFAM" id="SSF47266">
    <property type="entry name" value="4-helical cytokines"/>
    <property type="match status" value="1"/>
</dbReference>
<dbReference type="PROSITE" id="PS00424">
    <property type="entry name" value="INTERLEUKIN_2"/>
    <property type="match status" value="1"/>
</dbReference>
<keyword id="KW-1064">Adaptive immunity</keyword>
<keyword id="KW-0202">Cytokine</keyword>
<keyword id="KW-1015">Disulfide bond</keyword>
<keyword id="KW-0325">Glycoprotein</keyword>
<keyword id="KW-0339">Growth factor</keyword>
<keyword id="KW-0391">Immunity</keyword>
<keyword id="KW-1185">Reference proteome</keyword>
<keyword id="KW-0964">Secreted</keyword>
<keyword id="KW-0732">Signal</keyword>
<comment type="function">
    <text evidence="2">Cytokine produced by activated CD4-positive helper T-cells and to a lesser extend activated CD8-positive T-cells and natural killer (NK) cells that plays pivotal roles in the immune response and tolerance. Binds to a receptor complex composed of either the high-affinity trimeric IL-2R (IL2RA/CD25, IL2RB/CD122 and IL2RG/CD132) or the low-affinity dimeric IL-2R (IL2RB and IL2RG). Interaction with the receptor leads to oligomerization and conformation changes in the IL-2R subunits resulting in downstream signaling starting with phosphorylation of JAK1 and JAK3. In turn, JAK1 and JAK3 phosphorylate the receptor to form a docking site leading to the phosphorylation of several substrates including STAT5. This process leads to activation of several pathways including STAT, phosphoinositide-3-kinase/PI3K and mitogen-activated protein kinase/MAPK pathways. Functions as a T-cell growth factor and can increase NK-cell cytolytic activity as well. Promotes strong proliferation of activated B-cells and subsequently immunoglobulin production. Plays a pivotal role in regulating the adaptive immune system by controlling the survival and proliferation of regulatory T-cells, which are required for the maintenance of immune tolerance. Moreover, participates in the differentiation and homeostasis of effector T-cell subsets, including Th1, Th2, Th17 as well as memory CD8-positive T-cells.</text>
</comment>
<comment type="subcellular location">
    <subcellularLocation>
        <location>Secreted</location>
    </subcellularLocation>
</comment>
<comment type="similarity">
    <text evidence="4">Belongs to the IL-2 family.</text>
</comment>
<name>IL2_VULVU</name>
<reference key="1">
    <citation type="journal article" date="2006" name="Vet. Immunol. Immunopathol.">
        <title>Cloning of fox (Vulpes vulpes) IL2, IL6, IL10 and IFNgamma and analysis of their expression by quantitative RT-PCR in fox PBMC after in vitro stimulation by concanavalin A.</title>
        <authorList>
            <person name="Rolland-Turner M."/>
            <person name="Farre G."/>
            <person name="Boue F."/>
        </authorList>
    </citation>
    <scope>NUCLEOTIDE SEQUENCE [MRNA]</scope>
</reference>
<evidence type="ECO:0000250" key="1"/>
<evidence type="ECO:0000250" key="2">
    <source>
        <dbReference type="UniProtKB" id="P60568"/>
    </source>
</evidence>
<evidence type="ECO:0000255" key="3"/>
<evidence type="ECO:0000305" key="4"/>
<feature type="signal peptide" evidence="1">
    <location>
        <begin position="1"/>
        <end position="20"/>
    </location>
</feature>
<feature type="chain" id="PRO_0000235173" description="Interleukin-2">
    <location>
        <begin position="21"/>
        <end position="155"/>
    </location>
</feature>
<feature type="glycosylation site" description="O-linked (GalNAc...) threonine" evidence="1">
    <location>
        <position position="24"/>
    </location>
</feature>
<feature type="glycosylation site" description="N-linked (GlcNAc...) asparagine" evidence="3">
    <location>
        <position position="112"/>
    </location>
</feature>
<feature type="disulfide bond" evidence="1">
    <location>
        <begin position="79"/>
        <end position="127"/>
    </location>
</feature>
<gene>
    <name type="primary">IL2</name>
    <name type="synonym">IL-2</name>
</gene>
<accession>Q25BC3</accession>
<organism>
    <name type="scientific">Vulpes vulpes</name>
    <name type="common">Red fox</name>
    <dbReference type="NCBI Taxonomy" id="9627"/>
    <lineage>
        <taxon>Eukaryota</taxon>
        <taxon>Metazoa</taxon>
        <taxon>Chordata</taxon>
        <taxon>Craniata</taxon>
        <taxon>Vertebrata</taxon>
        <taxon>Euteleostomi</taxon>
        <taxon>Mammalia</taxon>
        <taxon>Eutheria</taxon>
        <taxon>Laurasiatheria</taxon>
        <taxon>Carnivora</taxon>
        <taxon>Caniformia</taxon>
        <taxon>Canidae</taxon>
        <taxon>Vulpes</taxon>
    </lineage>
</organism>
<sequence>MYKMQLLSCIALMLVLVANSAPITSSSTKETEQQMEQLLLDLQLLLNGVNNYENPQLSRMLTFKFYTPKKATEFTHLQCLAEELKNLEEVLGLPQSKNVHLTDTKELISNMNVTLLKLKGSETSYNCEYDDETATITEFLNKWITFCQSIFSTLT</sequence>